<protein>
    <recommendedName>
        <fullName>Glycoprotein hormones alpha chain</fullName>
    </recommendedName>
    <alternativeName>
        <fullName>Anterior pituitary glycoprotein hormones common subunit alpha</fullName>
    </alternativeName>
    <alternativeName>
        <fullName>Follicle-stimulating hormone alpha chain</fullName>
        <shortName>FSH-alpha</shortName>
    </alternativeName>
    <alternativeName>
        <fullName>Follitropin alpha chain</fullName>
    </alternativeName>
    <alternativeName>
        <fullName>Luteinizing hormone alpha chain</fullName>
        <shortName>LSH-alpha</shortName>
    </alternativeName>
    <alternativeName>
        <fullName>Lutropin alpha chain</fullName>
    </alternativeName>
    <alternativeName>
        <fullName>Thyroid-stimulating hormone alpha chain</fullName>
        <shortName>TSH-alpha</shortName>
    </alternativeName>
    <alternativeName>
        <fullName>Thyrotropin alpha chain</fullName>
    </alternativeName>
</protein>
<feature type="signal peptide" evidence="1">
    <location>
        <begin position="1"/>
        <end position="24"/>
    </location>
</feature>
<feature type="chain" id="PRO_0000011644" description="Glycoprotein hormones alpha chain">
    <location>
        <begin position="25"/>
        <end position="120"/>
    </location>
</feature>
<feature type="glycosylation site" description="N-linked (GlcNAc...) asparagine" evidence="2">
    <location>
        <position position="80"/>
    </location>
</feature>
<feature type="glycosylation site" description="N-linked (GlcNAc...) asparagine" evidence="2">
    <location>
        <position position="106"/>
    </location>
</feature>
<feature type="disulfide bond" evidence="2">
    <location>
        <begin position="35"/>
        <end position="59"/>
    </location>
</feature>
<feature type="disulfide bond" evidence="2">
    <location>
        <begin position="38"/>
        <end position="88"/>
    </location>
</feature>
<feature type="disulfide bond" evidence="2">
    <location>
        <begin position="56"/>
        <end position="110"/>
    </location>
</feature>
<feature type="disulfide bond" evidence="2">
    <location>
        <begin position="60"/>
        <end position="112"/>
    </location>
</feature>
<feature type="disulfide bond" evidence="2">
    <location>
        <begin position="87"/>
        <end position="115"/>
    </location>
</feature>
<name>GLHA_MASCO</name>
<evidence type="ECO:0000250" key="1"/>
<evidence type="ECO:0000250" key="2">
    <source>
        <dbReference type="UniProtKB" id="P01215"/>
    </source>
</evidence>
<evidence type="ECO:0000305" key="3"/>
<proteinExistence type="evidence at transcript level"/>
<dbReference type="EMBL" id="AF307149">
    <property type="protein sequence ID" value="AAG30277.1"/>
    <property type="molecule type" value="mRNA"/>
</dbReference>
<dbReference type="SMR" id="Q9ERG4"/>
<dbReference type="GlyCosmos" id="Q9ERG4">
    <property type="glycosylation" value="2 sites, No reported glycans"/>
</dbReference>
<dbReference type="GO" id="GO:0005615">
    <property type="term" value="C:extracellular space"/>
    <property type="evidence" value="ECO:0000250"/>
    <property type="project" value="UniProtKB"/>
</dbReference>
<dbReference type="GO" id="GO:0016914">
    <property type="term" value="C:follicle-stimulating hormone complex"/>
    <property type="evidence" value="ECO:0000250"/>
    <property type="project" value="UniProtKB"/>
</dbReference>
<dbReference type="GO" id="GO:0016913">
    <property type="term" value="F:follicle-stimulating hormone activity"/>
    <property type="evidence" value="ECO:0000250"/>
    <property type="project" value="UniProtKB"/>
</dbReference>
<dbReference type="GO" id="GO:0007186">
    <property type="term" value="P:G protein-coupled receptor signaling pathway"/>
    <property type="evidence" value="ECO:0000250"/>
    <property type="project" value="UniProtKB"/>
</dbReference>
<dbReference type="GO" id="GO:0010893">
    <property type="term" value="P:positive regulation of steroid biosynthetic process"/>
    <property type="evidence" value="ECO:0000250"/>
    <property type="project" value="UniProtKB"/>
</dbReference>
<dbReference type="GO" id="GO:0010469">
    <property type="term" value="P:regulation of signaling receptor activity"/>
    <property type="evidence" value="ECO:0000250"/>
    <property type="project" value="UniProtKB"/>
</dbReference>
<dbReference type="GO" id="GO:0006590">
    <property type="term" value="P:thyroid hormone generation"/>
    <property type="evidence" value="ECO:0007669"/>
    <property type="project" value="TreeGrafter"/>
</dbReference>
<dbReference type="FunFam" id="2.10.90.10:FF:000011">
    <property type="entry name" value="Glycoprotein hormones alpha chain"/>
    <property type="match status" value="1"/>
</dbReference>
<dbReference type="Gene3D" id="2.10.90.10">
    <property type="entry name" value="Cystine-knot cytokines"/>
    <property type="match status" value="1"/>
</dbReference>
<dbReference type="InterPro" id="IPR029034">
    <property type="entry name" value="Cystine-knot_cytokine"/>
</dbReference>
<dbReference type="InterPro" id="IPR000476">
    <property type="entry name" value="Glyco_hormone"/>
</dbReference>
<dbReference type="PANTHER" id="PTHR11509">
    <property type="entry name" value="GLYCOPROTEIN HORMONE ALPHA CHAIN"/>
    <property type="match status" value="1"/>
</dbReference>
<dbReference type="PANTHER" id="PTHR11509:SF0">
    <property type="entry name" value="GLYCOPROTEIN HORMONES ALPHA CHAIN"/>
    <property type="match status" value="1"/>
</dbReference>
<dbReference type="Pfam" id="PF00236">
    <property type="entry name" value="Hormone_6"/>
    <property type="match status" value="1"/>
</dbReference>
<dbReference type="PRINTS" id="PR00274">
    <property type="entry name" value="GLYCOHORMONE"/>
</dbReference>
<dbReference type="SMART" id="SM00067">
    <property type="entry name" value="GHA"/>
    <property type="match status" value="1"/>
</dbReference>
<dbReference type="SUPFAM" id="SSF57501">
    <property type="entry name" value="Cystine-knot cytokines"/>
    <property type="match status" value="1"/>
</dbReference>
<dbReference type="PROSITE" id="PS00779">
    <property type="entry name" value="GLYCO_HORMONE_ALPHA_1"/>
    <property type="match status" value="1"/>
</dbReference>
<dbReference type="PROSITE" id="PS00780">
    <property type="entry name" value="GLYCO_HORMONE_ALPHA_2"/>
    <property type="match status" value="1"/>
</dbReference>
<dbReference type="PROSITE" id="PS50277">
    <property type="entry name" value="GLYCO_HORMONE_ALPHA_3"/>
    <property type="match status" value="1"/>
</dbReference>
<reference key="1">
    <citation type="journal article" date="2002" name="Mol. Reprod. Dev.">
        <title>Comparison of glycoprotein hormone alpha-subunits of laboratory animals.</title>
        <authorList>
            <person name="Suzuki O."/>
            <person name="Mochida K."/>
            <person name="Yamamoto Y."/>
            <person name="Noguchi Y."/>
            <person name="Takano K."/>
            <person name="Matsuda J."/>
            <person name="Ogura A."/>
        </authorList>
    </citation>
    <scope>NUCLEOTIDE SEQUENCE [MRNA]</scope>
    <source>
        <strain>MCC</strain>
        <tissue>Pituitary</tissue>
    </source>
</reference>
<gene>
    <name type="primary">CGA</name>
</gene>
<sequence length="120" mass="13473">MDYCRKYAAVILVMLSVFLHILHSLPDGDFIIQGCPECKLKENKYFSKLGAPIYQCMGCCFSRAYPTPARSKKTMLVPKNITSEATCCVAKAFTKATVMGNARVENHTECHCSTCYYHKS</sequence>
<keyword id="KW-1015">Disulfide bond</keyword>
<keyword id="KW-0325">Glycoprotein</keyword>
<keyword id="KW-0372">Hormone</keyword>
<keyword id="KW-0964">Secreted</keyword>
<keyword id="KW-0732">Signal</keyword>
<accession>Q9ERG4</accession>
<organism>
    <name type="scientific">Mastomys coucha</name>
    <name type="common">Southern multimammate mouse</name>
    <name type="synonym">Praomys coucha</name>
    <dbReference type="NCBI Taxonomy" id="35658"/>
    <lineage>
        <taxon>Eukaryota</taxon>
        <taxon>Metazoa</taxon>
        <taxon>Chordata</taxon>
        <taxon>Craniata</taxon>
        <taxon>Vertebrata</taxon>
        <taxon>Euteleostomi</taxon>
        <taxon>Mammalia</taxon>
        <taxon>Eutheria</taxon>
        <taxon>Euarchontoglires</taxon>
        <taxon>Glires</taxon>
        <taxon>Rodentia</taxon>
        <taxon>Myomorpha</taxon>
        <taxon>Muroidea</taxon>
        <taxon>Muridae</taxon>
        <taxon>Murinae</taxon>
        <taxon>Mastomys</taxon>
    </lineage>
</organism>
<comment type="function">
    <text evidence="2">Shared alpha chain of the active heterodimeric glycoprotein hormones thyrotropin/thyroid stimulating hormone/TSH, lutropin/luteinizing hormone/LH and follitropin/follicle stimulating hormone/FSH. These hormones bind specific receptors on target cells that in turn activate downstream signaling pathways.</text>
</comment>
<comment type="subunit">
    <text evidence="2">Heterodimer. The active hormones thyrotropin, lutropin and follitropin are heterodimers composed of CGA, a common alpha chain described here and a unique beta chain which confers their biological specificity to the hormones: TSHB for thyrotropin, LHB for lutropin and FSHB for follitropin.</text>
</comment>
<comment type="subcellular location">
    <subcellularLocation>
        <location evidence="2">Secreted</location>
    </subcellularLocation>
</comment>
<comment type="similarity">
    <text evidence="3">Belongs to the glycoprotein hormones subunit alpha family.</text>
</comment>